<protein>
    <recommendedName>
        <fullName evidence="1">Large ribosomal subunit protein bL20</fullName>
    </recommendedName>
    <alternativeName>
        <fullName evidence="2">50S ribosomal protein L20</fullName>
    </alternativeName>
</protein>
<comment type="function">
    <text evidence="1">Binds directly to 23S ribosomal RNA and is necessary for the in vitro assembly process of the 50S ribosomal subunit. It is not involved in the protein synthesizing functions of that subunit.</text>
</comment>
<comment type="similarity">
    <text evidence="1">Belongs to the bacterial ribosomal protein bL20 family.</text>
</comment>
<name>RL20_ACIET</name>
<feature type="chain" id="PRO_1000193957" description="Large ribosomal subunit protein bL20">
    <location>
        <begin position="1"/>
        <end position="119"/>
    </location>
</feature>
<keyword id="KW-1185">Reference proteome</keyword>
<keyword id="KW-0687">Ribonucleoprotein</keyword>
<keyword id="KW-0689">Ribosomal protein</keyword>
<keyword id="KW-0694">RNA-binding</keyword>
<keyword id="KW-0699">rRNA-binding</keyword>
<organism>
    <name type="scientific">Acidovorax ebreus (strain TPSY)</name>
    <name type="common">Diaphorobacter sp. (strain TPSY)</name>
    <dbReference type="NCBI Taxonomy" id="535289"/>
    <lineage>
        <taxon>Bacteria</taxon>
        <taxon>Pseudomonadati</taxon>
        <taxon>Pseudomonadota</taxon>
        <taxon>Betaproteobacteria</taxon>
        <taxon>Burkholderiales</taxon>
        <taxon>Comamonadaceae</taxon>
        <taxon>Diaphorobacter</taxon>
    </lineage>
</organism>
<evidence type="ECO:0000255" key="1">
    <source>
        <dbReference type="HAMAP-Rule" id="MF_00382"/>
    </source>
</evidence>
<evidence type="ECO:0000305" key="2"/>
<reference key="1">
    <citation type="submission" date="2009-01" db="EMBL/GenBank/DDBJ databases">
        <title>Complete sequence of Diaphorobacter sp. TPSY.</title>
        <authorList>
            <consortium name="US DOE Joint Genome Institute"/>
            <person name="Lucas S."/>
            <person name="Copeland A."/>
            <person name="Lapidus A."/>
            <person name="Glavina del Rio T."/>
            <person name="Tice H."/>
            <person name="Bruce D."/>
            <person name="Goodwin L."/>
            <person name="Pitluck S."/>
            <person name="Chertkov O."/>
            <person name="Brettin T."/>
            <person name="Detter J.C."/>
            <person name="Han C."/>
            <person name="Larimer F."/>
            <person name="Land M."/>
            <person name="Hauser L."/>
            <person name="Kyrpides N."/>
            <person name="Mikhailova N."/>
            <person name="Coates J.D."/>
        </authorList>
    </citation>
    <scope>NUCLEOTIDE SEQUENCE [LARGE SCALE GENOMIC DNA]</scope>
    <source>
        <strain>TPSY</strain>
    </source>
</reference>
<sequence>MPRVKRGVTARARHKKVLALAKGFRGRRGNVFRIAKQAVMKAGQYAYRDRRTKKRVFRQLWIARINAAARELGLTYSQFANGLKKASIEVDRKMLADLAVHDKAAFGSIVEQVKAKLAA</sequence>
<accession>B9MHY1</accession>
<proteinExistence type="inferred from homology"/>
<dbReference type="EMBL" id="CP001392">
    <property type="protein sequence ID" value="ACM32913.1"/>
    <property type="molecule type" value="Genomic_DNA"/>
</dbReference>
<dbReference type="RefSeq" id="WP_015913047.1">
    <property type="nucleotide sequence ID" value="NC_011992.1"/>
</dbReference>
<dbReference type="SMR" id="B9MHY1"/>
<dbReference type="KEGG" id="dia:Dtpsy_1451"/>
<dbReference type="eggNOG" id="COG0292">
    <property type="taxonomic scope" value="Bacteria"/>
</dbReference>
<dbReference type="HOGENOM" id="CLU_123265_0_1_4"/>
<dbReference type="Proteomes" id="UP000000450">
    <property type="component" value="Chromosome"/>
</dbReference>
<dbReference type="GO" id="GO:1990904">
    <property type="term" value="C:ribonucleoprotein complex"/>
    <property type="evidence" value="ECO:0007669"/>
    <property type="project" value="UniProtKB-KW"/>
</dbReference>
<dbReference type="GO" id="GO:0005840">
    <property type="term" value="C:ribosome"/>
    <property type="evidence" value="ECO:0007669"/>
    <property type="project" value="UniProtKB-KW"/>
</dbReference>
<dbReference type="GO" id="GO:0019843">
    <property type="term" value="F:rRNA binding"/>
    <property type="evidence" value="ECO:0007669"/>
    <property type="project" value="UniProtKB-UniRule"/>
</dbReference>
<dbReference type="GO" id="GO:0003735">
    <property type="term" value="F:structural constituent of ribosome"/>
    <property type="evidence" value="ECO:0007669"/>
    <property type="project" value="InterPro"/>
</dbReference>
<dbReference type="GO" id="GO:0000027">
    <property type="term" value="P:ribosomal large subunit assembly"/>
    <property type="evidence" value="ECO:0007669"/>
    <property type="project" value="UniProtKB-UniRule"/>
</dbReference>
<dbReference type="GO" id="GO:0006412">
    <property type="term" value="P:translation"/>
    <property type="evidence" value="ECO:0007669"/>
    <property type="project" value="InterPro"/>
</dbReference>
<dbReference type="CDD" id="cd07026">
    <property type="entry name" value="Ribosomal_L20"/>
    <property type="match status" value="1"/>
</dbReference>
<dbReference type="FunFam" id="1.10.1900.20:FF:000001">
    <property type="entry name" value="50S ribosomal protein L20"/>
    <property type="match status" value="1"/>
</dbReference>
<dbReference type="Gene3D" id="6.10.160.10">
    <property type="match status" value="1"/>
</dbReference>
<dbReference type="Gene3D" id="1.10.1900.20">
    <property type="entry name" value="Ribosomal protein L20"/>
    <property type="match status" value="1"/>
</dbReference>
<dbReference type="HAMAP" id="MF_00382">
    <property type="entry name" value="Ribosomal_bL20"/>
    <property type="match status" value="1"/>
</dbReference>
<dbReference type="InterPro" id="IPR005813">
    <property type="entry name" value="Ribosomal_bL20"/>
</dbReference>
<dbReference type="InterPro" id="IPR049946">
    <property type="entry name" value="RIBOSOMAL_L20_CS"/>
</dbReference>
<dbReference type="InterPro" id="IPR035566">
    <property type="entry name" value="Ribosomal_protein_bL20_C"/>
</dbReference>
<dbReference type="NCBIfam" id="TIGR01032">
    <property type="entry name" value="rplT_bact"/>
    <property type="match status" value="1"/>
</dbReference>
<dbReference type="PANTHER" id="PTHR10986">
    <property type="entry name" value="39S RIBOSOMAL PROTEIN L20"/>
    <property type="match status" value="1"/>
</dbReference>
<dbReference type="Pfam" id="PF00453">
    <property type="entry name" value="Ribosomal_L20"/>
    <property type="match status" value="1"/>
</dbReference>
<dbReference type="PRINTS" id="PR00062">
    <property type="entry name" value="RIBOSOMALL20"/>
</dbReference>
<dbReference type="SUPFAM" id="SSF74731">
    <property type="entry name" value="Ribosomal protein L20"/>
    <property type="match status" value="1"/>
</dbReference>
<dbReference type="PROSITE" id="PS00937">
    <property type="entry name" value="RIBOSOMAL_L20"/>
    <property type="match status" value="1"/>
</dbReference>
<gene>
    <name evidence="1" type="primary">rplT</name>
    <name type="ordered locus">Dtpsy_1451</name>
</gene>